<protein>
    <recommendedName>
        <fullName>Protease PrtS</fullName>
        <ecNumber>3.4.24.-</ecNumber>
    </recommendedName>
</protein>
<proteinExistence type="evidence at protein level"/>
<evidence type="ECO:0000250" key="1">
    <source>
        <dbReference type="UniProtKB" id="P05806"/>
    </source>
</evidence>
<evidence type="ECO:0000255" key="2"/>
<evidence type="ECO:0000255" key="3">
    <source>
        <dbReference type="PROSITE-ProRule" id="PRU10095"/>
    </source>
</evidence>
<evidence type="ECO:0000256" key="4">
    <source>
        <dbReference type="SAM" id="MobiDB-lite"/>
    </source>
</evidence>
<evidence type="ECO:0000269" key="5">
    <source>
    </source>
</evidence>
<evidence type="ECO:0000305" key="6"/>
<evidence type="ECO:0000312" key="7">
    <source>
        <dbReference type="EMBL" id="ABY26041.1"/>
    </source>
</evidence>
<feature type="signal peptide" evidence="2">
    <location>
        <begin position="1"/>
        <end status="unknown"/>
    </location>
</feature>
<feature type="chain" id="PRO_0000397930" description="Protease PrtS">
    <location>
        <begin status="unknown"/>
        <end position="371"/>
    </location>
</feature>
<feature type="region of interest" description="Disordered" evidence="4">
    <location>
        <begin position="352"/>
        <end position="371"/>
    </location>
</feature>
<feature type="active site" evidence="1 3">
    <location>
        <position position="170"/>
    </location>
</feature>
<feature type="active site" description="Proton donor" evidence="1 3">
    <location>
        <position position="273"/>
    </location>
</feature>
<feature type="binding site" evidence="1 3">
    <location>
        <position position="169"/>
    </location>
    <ligand>
        <name>Zn(2+)</name>
        <dbReference type="ChEBI" id="CHEBI:29105"/>
        <note>catalytic</note>
    </ligand>
</feature>
<feature type="binding site" evidence="1 3">
    <location>
        <position position="173"/>
    </location>
    <ligand>
        <name>Zn(2+)</name>
        <dbReference type="ChEBI" id="CHEBI:29105"/>
        <note>catalytic</note>
    </ligand>
</feature>
<feature type="binding site" evidence="1 3">
    <location>
        <position position="193"/>
    </location>
    <ligand>
        <name>Zn(2+)</name>
        <dbReference type="ChEBI" id="CHEBI:29105"/>
        <note>catalytic</note>
    </ligand>
</feature>
<feature type="sequence conflict" description="In Ref. 2; AA sequence." evidence="6" ref="2">
    <original>T</original>
    <variation>Y</variation>
    <location>
        <position position="57"/>
    </location>
</feature>
<feature type="sequence conflict" description="In Ref. 2; AA sequence." evidence="6" ref="2">
    <original>V</original>
    <variation>P</variation>
    <location>
        <position position="62"/>
    </location>
</feature>
<dbReference type="EC" id="3.4.24.-"/>
<dbReference type="EMBL" id="EU307118">
    <property type="protein sequence ID" value="ABY26041.1"/>
    <property type="molecule type" value="Genomic_DNA"/>
</dbReference>
<dbReference type="SMR" id="A9YWT8"/>
<dbReference type="MEROPS" id="M04.024"/>
<dbReference type="GO" id="GO:0005576">
    <property type="term" value="C:extracellular region"/>
    <property type="evidence" value="ECO:0007669"/>
    <property type="project" value="UniProtKB-SubCell"/>
</dbReference>
<dbReference type="GO" id="GO:0046872">
    <property type="term" value="F:metal ion binding"/>
    <property type="evidence" value="ECO:0007669"/>
    <property type="project" value="UniProtKB-KW"/>
</dbReference>
<dbReference type="GO" id="GO:0004222">
    <property type="term" value="F:metalloendopeptidase activity"/>
    <property type="evidence" value="ECO:0007669"/>
    <property type="project" value="InterPro"/>
</dbReference>
<dbReference type="GO" id="GO:0006508">
    <property type="term" value="P:proteolysis"/>
    <property type="evidence" value="ECO:0007669"/>
    <property type="project" value="UniProtKB-KW"/>
</dbReference>
<dbReference type="CDD" id="cd09597">
    <property type="entry name" value="M4_TLP"/>
    <property type="match status" value="1"/>
</dbReference>
<dbReference type="Gene3D" id="3.10.170.10">
    <property type="match status" value="1"/>
</dbReference>
<dbReference type="Gene3D" id="1.10.390.10">
    <property type="entry name" value="Neutral Protease Domain 2"/>
    <property type="match status" value="1"/>
</dbReference>
<dbReference type="InterPro" id="IPR052759">
    <property type="entry name" value="Metalloprotease_M4"/>
</dbReference>
<dbReference type="InterPro" id="IPR023612">
    <property type="entry name" value="Peptidase_M4"/>
</dbReference>
<dbReference type="InterPro" id="IPR027268">
    <property type="entry name" value="Peptidase_M4/M1_CTD_sf"/>
</dbReference>
<dbReference type="InterPro" id="IPR001570">
    <property type="entry name" value="Peptidase_M4_C_domain"/>
</dbReference>
<dbReference type="InterPro" id="IPR013856">
    <property type="entry name" value="Peptidase_M4_domain"/>
</dbReference>
<dbReference type="InterPro" id="IPR032475">
    <property type="entry name" value="Protealysin_N_PP"/>
</dbReference>
<dbReference type="PANTHER" id="PTHR43579">
    <property type="match status" value="1"/>
</dbReference>
<dbReference type="PANTHER" id="PTHR43579:SF1">
    <property type="entry name" value="NEUTRAL METALLOPROTEINASE"/>
    <property type="match status" value="1"/>
</dbReference>
<dbReference type="Pfam" id="PF01447">
    <property type="entry name" value="Peptidase_M4"/>
    <property type="match status" value="1"/>
</dbReference>
<dbReference type="Pfam" id="PF02868">
    <property type="entry name" value="Peptidase_M4_C"/>
    <property type="match status" value="1"/>
</dbReference>
<dbReference type="Pfam" id="PF16485">
    <property type="entry name" value="PLN_propep"/>
    <property type="match status" value="1"/>
</dbReference>
<dbReference type="PRINTS" id="PR00730">
    <property type="entry name" value="THERMOLYSIN"/>
</dbReference>
<dbReference type="SUPFAM" id="SSF55486">
    <property type="entry name" value="Metalloproteases ('zincins'), catalytic domain"/>
    <property type="match status" value="1"/>
</dbReference>
<dbReference type="PROSITE" id="PS00142">
    <property type="entry name" value="ZINC_PROTEASE"/>
    <property type="match status" value="1"/>
</dbReference>
<keyword id="KW-0903">Direct protein sequencing</keyword>
<keyword id="KW-0378">Hydrolase</keyword>
<keyword id="KW-0479">Metal-binding</keyword>
<keyword id="KW-0482">Metalloprotease</keyword>
<keyword id="KW-0645">Protease</keyword>
<keyword id="KW-0964">Secreted</keyword>
<keyword id="KW-0732">Signal</keyword>
<keyword id="KW-0862">Zinc</keyword>
<name>PRTS_PHOAZ</name>
<sequence>MQIQNNNYKGLIPPYILQNIYKNTSESEKDNVLMTLNHTQSLMLDSVIKTSDSIDNTDDEVVSDTLHRSIYDAKNETKLPGTLVRDEGDPDNGDVAVDNAYKYLEATYNFYKEVFNRNSLDDKGMKLIATVHYGKEYMNAYWGRGQMVFGDGDGKVFNNFTTSIDVIGHELSHGVIEKTADLIYFFQSGALNESIADVFGSLVRQHYLKQKADEASWVVGEELLAKGIKGVGIRSMKEPGKAYDDPLLGKNPQPGHMDDFKDYPIYRDNGGVHVNSGIPNKAFYNLAIKLGGYAWEKAGKIWYNTLLDKDLARDTTFLSFAKLTVKHARDLFDEDVEKATIDSWKEVGIKVKEEDKDKGKDEGKDKAETKV</sequence>
<accession>A9YWT8</accession>
<comment type="function">
    <text evidence="5">Metalloprotease involved in the inhibition of insect antibacterial peptides. Reduces the antibacterial activity of G.mellonella hemolymph by 50%. Reduces the antibacterial activity of cecropin A by 80% and completely inhibits cecropin B.</text>
</comment>
<comment type="cofactor">
    <cofactor evidence="1">
        <name>Zn(2+)</name>
        <dbReference type="ChEBI" id="CHEBI:29105"/>
    </cofactor>
    <text evidence="1">Binds 1 zinc ion per subunit.</text>
</comment>
<comment type="activity regulation">
    <text evidence="5">Inhibited by 8 mM 1,10-phenanthroline, but not by EDTA or PMSF.</text>
</comment>
<comment type="biophysicochemical properties">
    <phDependence>
        <text evidence="5">Optimum pH is 7.0.</text>
    </phDependence>
    <temperatureDependence>
        <text evidence="5">Optimum temperature is 50 degrees Celsius. Active from 10 to 80 degrees Celsius.</text>
    </temperatureDependence>
</comment>
<comment type="subcellular location">
    <subcellularLocation>
        <location evidence="5">Secreted</location>
    </subcellularLocation>
</comment>
<comment type="similarity">
    <text evidence="2">Belongs to the peptidase M4 family.</text>
</comment>
<gene>
    <name evidence="7" type="primary">prtS</name>
</gene>
<reference evidence="7" key="1">
    <citation type="submission" date="2007-11" db="EMBL/GenBank/DDBJ databases">
        <title>Cloning and sequencing of the gene for PrtS a M4 family metalloprotease secreted by Photorhabdus sp. Az29.</title>
        <authorList>
            <person name="Cabral C.M."/>
            <person name="Montiel R."/>
            <person name="Simoes N."/>
        </authorList>
    </citation>
    <scope>NUCLEOTIDE SEQUENCE [GENOMIC DNA]</scope>
</reference>
<reference evidence="6" key="2">
    <citation type="journal article" date="2004" name="Appl. Environ. Microbiol.">
        <title>Purification and characterization of two distinct metalloproteases secreted by the entomopathogenic bacterium Photorhabdus sp. strain Az29.</title>
        <authorList>
            <person name="Cabral C.M."/>
            <person name="Cherqui A."/>
            <person name="Pereira A."/>
            <person name="Simoes N."/>
        </authorList>
    </citation>
    <scope>PROTEIN SEQUENCE OF 56-67; 103-112; 290-297 AND 314-322</scope>
    <scope>FUNCTION</scope>
    <scope>ACTIVITY REGULATION</scope>
    <scope>BIOPHYSICOCHEMICAL PROPERTIES</scope>
    <scope>SUBCELLULAR LOCATION</scope>
</reference>
<organism>
    <name type="scientific">Photorhabdus sp. (strain Az29)</name>
    <dbReference type="NCBI Taxonomy" id="229779"/>
    <lineage>
        <taxon>Bacteria</taxon>
        <taxon>Pseudomonadati</taxon>
        <taxon>Pseudomonadota</taxon>
        <taxon>Gammaproteobacteria</taxon>
        <taxon>Enterobacterales</taxon>
        <taxon>Morganellaceae</taxon>
        <taxon>Photorhabdus</taxon>
    </lineage>
</organism>